<proteinExistence type="inferred from homology"/>
<comment type="catalytic activity">
    <reaction evidence="1">
        <text>(S)-2,3,4,5-tetrahydrodipicolinate + succinyl-CoA + H2O = (S)-2-succinylamino-6-oxoheptanedioate + CoA</text>
        <dbReference type="Rhea" id="RHEA:17325"/>
        <dbReference type="ChEBI" id="CHEBI:15377"/>
        <dbReference type="ChEBI" id="CHEBI:15685"/>
        <dbReference type="ChEBI" id="CHEBI:16845"/>
        <dbReference type="ChEBI" id="CHEBI:57287"/>
        <dbReference type="ChEBI" id="CHEBI:57292"/>
        <dbReference type="EC" id="2.3.1.117"/>
    </reaction>
</comment>
<comment type="pathway">
    <text evidence="1">Amino-acid biosynthesis; L-lysine biosynthesis via DAP pathway; LL-2,6-diaminopimelate from (S)-tetrahydrodipicolinate (succinylase route): step 1/3.</text>
</comment>
<comment type="subcellular location">
    <subcellularLocation>
        <location evidence="1">Cytoplasm</location>
    </subcellularLocation>
</comment>
<comment type="similarity">
    <text evidence="1">Belongs to the transferase hexapeptide repeat family.</text>
</comment>
<protein>
    <recommendedName>
        <fullName evidence="1">2,3,4,5-tetrahydropyridine-2,6-dicarboxylate N-succinyltransferase</fullName>
        <ecNumber evidence="1">2.3.1.117</ecNumber>
    </recommendedName>
    <alternativeName>
        <fullName evidence="1">Tetrahydrodipicolinate N-succinyltransferase</fullName>
        <shortName evidence="1">THP succinyltransferase</shortName>
        <shortName evidence="1">Tetrahydropicolinate succinylase</shortName>
    </alternativeName>
</protein>
<keyword id="KW-0012">Acyltransferase</keyword>
<keyword id="KW-0028">Amino-acid biosynthesis</keyword>
<keyword id="KW-0963">Cytoplasm</keyword>
<keyword id="KW-0220">Diaminopimelate biosynthesis</keyword>
<keyword id="KW-0457">Lysine biosynthesis</keyword>
<keyword id="KW-0677">Repeat</keyword>
<keyword id="KW-0808">Transferase</keyword>
<reference key="1">
    <citation type="journal article" date="2008" name="DNA Res.">
        <title>Complete genome sequence and comparative analysis of the wild-type commensal Escherichia coli strain SE11 isolated from a healthy adult.</title>
        <authorList>
            <person name="Oshima K."/>
            <person name="Toh H."/>
            <person name="Ogura Y."/>
            <person name="Sasamoto H."/>
            <person name="Morita H."/>
            <person name="Park S.-H."/>
            <person name="Ooka T."/>
            <person name="Iyoda S."/>
            <person name="Taylor T.D."/>
            <person name="Hayashi T."/>
            <person name="Itoh K."/>
            <person name="Hattori M."/>
        </authorList>
    </citation>
    <scope>NUCLEOTIDE SEQUENCE [LARGE SCALE GENOMIC DNA]</scope>
    <source>
        <strain>SE11</strain>
    </source>
</reference>
<dbReference type="EC" id="2.3.1.117" evidence="1"/>
<dbReference type="EMBL" id="AP009240">
    <property type="protein sequence ID" value="BAG75689.1"/>
    <property type="molecule type" value="Genomic_DNA"/>
</dbReference>
<dbReference type="RefSeq" id="WP_001186650.1">
    <property type="nucleotide sequence ID" value="NC_011415.1"/>
</dbReference>
<dbReference type="SMR" id="B6HZE0"/>
<dbReference type="GeneID" id="93777259"/>
<dbReference type="KEGG" id="ecy:ECSE_0165"/>
<dbReference type="HOGENOM" id="CLU_050859_0_1_6"/>
<dbReference type="UniPathway" id="UPA00034">
    <property type="reaction ID" value="UER00019"/>
</dbReference>
<dbReference type="Proteomes" id="UP000008199">
    <property type="component" value="Chromosome"/>
</dbReference>
<dbReference type="GO" id="GO:0005737">
    <property type="term" value="C:cytoplasm"/>
    <property type="evidence" value="ECO:0007669"/>
    <property type="project" value="UniProtKB-SubCell"/>
</dbReference>
<dbReference type="GO" id="GO:0008666">
    <property type="term" value="F:2,3,4,5-tetrahydropyridine-2,6-dicarboxylate N-succinyltransferase activity"/>
    <property type="evidence" value="ECO:0007669"/>
    <property type="project" value="UniProtKB-UniRule"/>
</dbReference>
<dbReference type="GO" id="GO:0016779">
    <property type="term" value="F:nucleotidyltransferase activity"/>
    <property type="evidence" value="ECO:0007669"/>
    <property type="project" value="TreeGrafter"/>
</dbReference>
<dbReference type="GO" id="GO:0019877">
    <property type="term" value="P:diaminopimelate biosynthetic process"/>
    <property type="evidence" value="ECO:0007669"/>
    <property type="project" value="UniProtKB-UniRule"/>
</dbReference>
<dbReference type="GO" id="GO:0009089">
    <property type="term" value="P:lysine biosynthetic process via diaminopimelate"/>
    <property type="evidence" value="ECO:0007669"/>
    <property type="project" value="UniProtKB-UniRule"/>
</dbReference>
<dbReference type="CDD" id="cd03350">
    <property type="entry name" value="LbH_THP_succinylT"/>
    <property type="match status" value="1"/>
</dbReference>
<dbReference type="FunFam" id="1.10.166.10:FF:000001">
    <property type="entry name" value="2,3,4,5-tetrahydropyridine-2,6-dicarboxylate N-succinyltransferase"/>
    <property type="match status" value="1"/>
</dbReference>
<dbReference type="FunFam" id="2.160.10.10:FF:000004">
    <property type="entry name" value="2,3,4,5-tetrahydropyridine-2,6-dicarboxylate N-succinyltransferase"/>
    <property type="match status" value="1"/>
</dbReference>
<dbReference type="Gene3D" id="2.160.10.10">
    <property type="entry name" value="Hexapeptide repeat proteins"/>
    <property type="match status" value="1"/>
</dbReference>
<dbReference type="Gene3D" id="1.10.166.10">
    <property type="entry name" value="Tetrahydrodipicolinate-N-succinyltransferase, N-terminal domain"/>
    <property type="match status" value="1"/>
</dbReference>
<dbReference type="HAMAP" id="MF_00811">
    <property type="entry name" value="DapD"/>
    <property type="match status" value="1"/>
</dbReference>
<dbReference type="InterPro" id="IPR005664">
    <property type="entry name" value="DapD_Trfase_Hexpep_rpt_fam"/>
</dbReference>
<dbReference type="InterPro" id="IPR001451">
    <property type="entry name" value="Hexapep"/>
</dbReference>
<dbReference type="InterPro" id="IPR018357">
    <property type="entry name" value="Hexapep_transf_CS"/>
</dbReference>
<dbReference type="InterPro" id="IPR023180">
    <property type="entry name" value="THP_succinylTrfase_dom1"/>
</dbReference>
<dbReference type="InterPro" id="IPR037133">
    <property type="entry name" value="THP_succinylTrfase_N_sf"/>
</dbReference>
<dbReference type="InterPro" id="IPR011004">
    <property type="entry name" value="Trimer_LpxA-like_sf"/>
</dbReference>
<dbReference type="NCBIfam" id="TIGR00965">
    <property type="entry name" value="dapD"/>
    <property type="match status" value="1"/>
</dbReference>
<dbReference type="NCBIfam" id="NF008808">
    <property type="entry name" value="PRK11830.1"/>
    <property type="match status" value="1"/>
</dbReference>
<dbReference type="PANTHER" id="PTHR19136:SF52">
    <property type="entry name" value="2,3,4,5-TETRAHYDROPYRIDINE-2,6-DICARBOXYLATE N-SUCCINYLTRANSFERASE"/>
    <property type="match status" value="1"/>
</dbReference>
<dbReference type="PANTHER" id="PTHR19136">
    <property type="entry name" value="MOLYBDENUM COFACTOR GUANYLYLTRANSFERASE"/>
    <property type="match status" value="1"/>
</dbReference>
<dbReference type="Pfam" id="PF14602">
    <property type="entry name" value="Hexapep_2"/>
    <property type="match status" value="1"/>
</dbReference>
<dbReference type="Pfam" id="PF14805">
    <property type="entry name" value="THDPS_N_2"/>
    <property type="match status" value="1"/>
</dbReference>
<dbReference type="SUPFAM" id="SSF51161">
    <property type="entry name" value="Trimeric LpxA-like enzymes"/>
    <property type="match status" value="1"/>
</dbReference>
<dbReference type="PROSITE" id="PS00101">
    <property type="entry name" value="HEXAPEP_TRANSFERASES"/>
    <property type="match status" value="1"/>
</dbReference>
<sequence length="274" mass="29892">MQQLQNIIETAFERRAEITPANADTVTREAVNQVIALLDSGALRVAEKIDGQWVTHQWLKKAVLLSFRINDNQVIEGAESRYFDKVPMKFADYDEARFQKEGFRVVPPAAVRQGAFIARNTVLMPSYVNIGAYVDEGTMVDTWATVGSCAQIGKNVHLSGGVGIGGVLEPLQANPTIIEDNCFIGARSEVVEGVIVEEGSVISMGVYIGQSTRIYDRETGEIHYGRVPAGSVVVSGNLPSKDGKYSLYCAVIVKKVDAKTRGKVGINELLRTID</sequence>
<feature type="chain" id="PRO_1000134047" description="2,3,4,5-tetrahydropyridine-2,6-dicarboxylate N-succinyltransferase">
    <location>
        <begin position="1"/>
        <end position="274"/>
    </location>
</feature>
<gene>
    <name evidence="1" type="primary">dapD</name>
    <name type="ordered locus">ECSE_0165</name>
</gene>
<accession>B6HZE0</accession>
<name>DAPD_ECOSE</name>
<evidence type="ECO:0000255" key="1">
    <source>
        <dbReference type="HAMAP-Rule" id="MF_00811"/>
    </source>
</evidence>
<organism>
    <name type="scientific">Escherichia coli (strain SE11)</name>
    <dbReference type="NCBI Taxonomy" id="409438"/>
    <lineage>
        <taxon>Bacteria</taxon>
        <taxon>Pseudomonadati</taxon>
        <taxon>Pseudomonadota</taxon>
        <taxon>Gammaproteobacteria</taxon>
        <taxon>Enterobacterales</taxon>
        <taxon>Enterobacteriaceae</taxon>
        <taxon>Escherichia</taxon>
    </lineage>
</organism>